<dbReference type="EC" id="2.7.13.3"/>
<dbReference type="EMBL" id="BX571857">
    <property type="protein sequence ID" value="CAG42446.1"/>
    <property type="molecule type" value="Genomic_DNA"/>
</dbReference>
<dbReference type="RefSeq" id="WP_000244415.1">
    <property type="nucleotide sequence ID" value="NC_002953.3"/>
</dbReference>
<dbReference type="SMR" id="Q6GBC5"/>
<dbReference type="KEGG" id="sas:SAS0670"/>
<dbReference type="HOGENOM" id="CLU_000445_89_3_9"/>
<dbReference type="GO" id="GO:0005886">
    <property type="term" value="C:plasma membrane"/>
    <property type="evidence" value="ECO:0007669"/>
    <property type="project" value="UniProtKB-SubCell"/>
</dbReference>
<dbReference type="GO" id="GO:0005524">
    <property type="term" value="F:ATP binding"/>
    <property type="evidence" value="ECO:0007669"/>
    <property type="project" value="UniProtKB-KW"/>
</dbReference>
<dbReference type="GO" id="GO:0004721">
    <property type="term" value="F:phosphoprotein phosphatase activity"/>
    <property type="evidence" value="ECO:0007669"/>
    <property type="project" value="TreeGrafter"/>
</dbReference>
<dbReference type="GO" id="GO:0000155">
    <property type="term" value="F:phosphorelay sensor kinase activity"/>
    <property type="evidence" value="ECO:0007669"/>
    <property type="project" value="InterPro"/>
</dbReference>
<dbReference type="GO" id="GO:0016036">
    <property type="term" value="P:cellular response to phosphate starvation"/>
    <property type="evidence" value="ECO:0007669"/>
    <property type="project" value="TreeGrafter"/>
</dbReference>
<dbReference type="CDD" id="cd00075">
    <property type="entry name" value="HATPase"/>
    <property type="match status" value="1"/>
</dbReference>
<dbReference type="CDD" id="cd00082">
    <property type="entry name" value="HisKA"/>
    <property type="match status" value="1"/>
</dbReference>
<dbReference type="FunFam" id="1.10.287.130:FF:000077">
    <property type="entry name" value="Sensor histidine kinase SaeS"/>
    <property type="match status" value="1"/>
</dbReference>
<dbReference type="Gene3D" id="1.10.287.130">
    <property type="match status" value="1"/>
</dbReference>
<dbReference type="Gene3D" id="6.10.340.10">
    <property type="match status" value="1"/>
</dbReference>
<dbReference type="Gene3D" id="3.30.565.10">
    <property type="entry name" value="Histidine kinase-like ATPase, C-terminal domain"/>
    <property type="match status" value="1"/>
</dbReference>
<dbReference type="InterPro" id="IPR050351">
    <property type="entry name" value="2-comp_sensor_kinase"/>
</dbReference>
<dbReference type="InterPro" id="IPR003660">
    <property type="entry name" value="HAMP_dom"/>
</dbReference>
<dbReference type="InterPro" id="IPR036890">
    <property type="entry name" value="HATPase_C_sf"/>
</dbReference>
<dbReference type="InterPro" id="IPR005467">
    <property type="entry name" value="His_kinase_dom"/>
</dbReference>
<dbReference type="InterPro" id="IPR003661">
    <property type="entry name" value="HisK_dim/P_dom"/>
</dbReference>
<dbReference type="InterPro" id="IPR036097">
    <property type="entry name" value="HisK_dim/P_sf"/>
</dbReference>
<dbReference type="InterPro" id="IPR004358">
    <property type="entry name" value="Sig_transdc_His_kin-like_C"/>
</dbReference>
<dbReference type="PANTHER" id="PTHR45453">
    <property type="entry name" value="PHOSPHATE REGULON SENSOR PROTEIN PHOR"/>
    <property type="match status" value="1"/>
</dbReference>
<dbReference type="PANTHER" id="PTHR45453:SF1">
    <property type="entry name" value="PHOSPHATE REGULON SENSOR PROTEIN PHOR"/>
    <property type="match status" value="1"/>
</dbReference>
<dbReference type="Pfam" id="PF00672">
    <property type="entry name" value="HAMP"/>
    <property type="match status" value="1"/>
</dbReference>
<dbReference type="Pfam" id="PF02518">
    <property type="entry name" value="HATPase_c"/>
    <property type="match status" value="1"/>
</dbReference>
<dbReference type="Pfam" id="PF00512">
    <property type="entry name" value="HisKA"/>
    <property type="match status" value="1"/>
</dbReference>
<dbReference type="PRINTS" id="PR00344">
    <property type="entry name" value="BCTRLSENSOR"/>
</dbReference>
<dbReference type="SMART" id="SM00387">
    <property type="entry name" value="HATPase_c"/>
    <property type="match status" value="1"/>
</dbReference>
<dbReference type="SMART" id="SM00388">
    <property type="entry name" value="HisKA"/>
    <property type="match status" value="1"/>
</dbReference>
<dbReference type="SUPFAM" id="SSF55874">
    <property type="entry name" value="ATPase domain of HSP90 chaperone/DNA topoisomerase II/histidine kinase"/>
    <property type="match status" value="1"/>
</dbReference>
<dbReference type="SUPFAM" id="SSF47384">
    <property type="entry name" value="Homodimeric domain of signal transducing histidine kinase"/>
    <property type="match status" value="1"/>
</dbReference>
<dbReference type="PROSITE" id="PS50885">
    <property type="entry name" value="HAMP"/>
    <property type="match status" value="1"/>
</dbReference>
<dbReference type="PROSITE" id="PS50109">
    <property type="entry name" value="HIS_KIN"/>
    <property type="match status" value="1"/>
</dbReference>
<evidence type="ECO:0000250" key="1"/>
<evidence type="ECO:0000255" key="2"/>
<evidence type="ECO:0000255" key="3">
    <source>
        <dbReference type="PROSITE-ProRule" id="PRU00102"/>
    </source>
</evidence>
<evidence type="ECO:0000255" key="4">
    <source>
        <dbReference type="PROSITE-ProRule" id="PRU00107"/>
    </source>
</evidence>
<feature type="chain" id="PRO_0000295933" description="Histidine protein kinase SaeS">
    <location>
        <begin position="1"/>
        <end position="351"/>
    </location>
</feature>
<feature type="transmembrane region" description="Helical" evidence="2">
    <location>
        <begin position="9"/>
        <end position="29"/>
    </location>
</feature>
<feature type="transmembrane region" description="Helical" evidence="2">
    <location>
        <begin position="40"/>
        <end position="60"/>
    </location>
</feature>
<feature type="domain" description="HAMP" evidence="3">
    <location>
        <begin position="61"/>
        <end position="114"/>
    </location>
</feature>
<feature type="domain" description="Histidine kinase" evidence="4">
    <location>
        <begin position="129"/>
        <end position="348"/>
    </location>
</feature>
<feature type="modified residue" description="Phosphohistidine; by autocatalysis" evidence="4">
    <location>
        <position position="132"/>
    </location>
</feature>
<name>SAES_STAAS</name>
<proteinExistence type="inferred from homology"/>
<sequence length="351" mass="39714">MVLSIRSQIIIGVVSSILLTSTILAIAYILMWFNGHMTLTLTLTTIITSCLTLLICSIFINPLIQKIKQFNIKTKQFANGNYASNDKTFNSPKEIYELNQSFNKMASEITQQMNQIKSEQQEKTELIQNLAHDLKTPLASIISYSEGLRDGIITKDHEIKESYDILIKQANRLSTLFDDMTHIITLNTGKTYPPELIQLDQLLVSILQPYEQRIKHENRTLEVNFCSEIDAFYQYRTPLERILTNLLDNALKFSNVGSRIDINISENKDQDTIDIAISDEGIGIIPELQERIFERTFRVENSRNTKTGGSGLGLYIANELAQQNNAKISVSSDIDVGTTMTVTLHKLDITS</sequence>
<protein>
    <recommendedName>
        <fullName>Histidine protein kinase SaeS</fullName>
        <ecNumber>2.7.13.3</ecNumber>
    </recommendedName>
    <alternativeName>
        <fullName>Sensor protein SaeS</fullName>
    </alternativeName>
    <alternativeName>
        <fullName>Staphylococcus exoprotein expression protein S</fullName>
    </alternativeName>
</protein>
<gene>
    <name type="primary">saeS</name>
    <name type="ordered locus">SAS0670</name>
</gene>
<reference key="1">
    <citation type="journal article" date="2004" name="Proc. Natl. Acad. Sci. U.S.A.">
        <title>Complete genomes of two clinical Staphylococcus aureus strains: evidence for the rapid evolution of virulence and drug resistance.</title>
        <authorList>
            <person name="Holden M.T.G."/>
            <person name="Feil E.J."/>
            <person name="Lindsay J.A."/>
            <person name="Peacock S.J."/>
            <person name="Day N.P.J."/>
            <person name="Enright M.C."/>
            <person name="Foster T.J."/>
            <person name="Moore C.E."/>
            <person name="Hurst L."/>
            <person name="Atkin R."/>
            <person name="Barron A."/>
            <person name="Bason N."/>
            <person name="Bentley S.D."/>
            <person name="Chillingworth C."/>
            <person name="Chillingworth T."/>
            <person name="Churcher C."/>
            <person name="Clark L."/>
            <person name="Corton C."/>
            <person name="Cronin A."/>
            <person name="Doggett J."/>
            <person name="Dowd L."/>
            <person name="Feltwell T."/>
            <person name="Hance Z."/>
            <person name="Harris B."/>
            <person name="Hauser H."/>
            <person name="Holroyd S."/>
            <person name="Jagels K."/>
            <person name="James K.D."/>
            <person name="Lennard N."/>
            <person name="Line A."/>
            <person name="Mayes R."/>
            <person name="Moule S."/>
            <person name="Mungall K."/>
            <person name="Ormond D."/>
            <person name="Quail M.A."/>
            <person name="Rabbinowitsch E."/>
            <person name="Rutherford K.M."/>
            <person name="Sanders M."/>
            <person name="Sharp S."/>
            <person name="Simmonds M."/>
            <person name="Stevens K."/>
            <person name="Whitehead S."/>
            <person name="Barrell B.G."/>
            <person name="Spratt B.G."/>
            <person name="Parkhill J."/>
        </authorList>
    </citation>
    <scope>NUCLEOTIDE SEQUENCE [LARGE SCALE GENOMIC DNA]</scope>
    <source>
        <strain>MSSA476</strain>
    </source>
</reference>
<keyword id="KW-0067">ATP-binding</keyword>
<keyword id="KW-1003">Cell membrane</keyword>
<keyword id="KW-0418">Kinase</keyword>
<keyword id="KW-0472">Membrane</keyword>
<keyword id="KW-0547">Nucleotide-binding</keyword>
<keyword id="KW-0597">Phosphoprotein</keyword>
<keyword id="KW-0808">Transferase</keyword>
<keyword id="KW-0812">Transmembrane</keyword>
<keyword id="KW-1133">Transmembrane helix</keyword>
<keyword id="KW-0902">Two-component regulatory system</keyword>
<keyword id="KW-0843">Virulence</keyword>
<organism>
    <name type="scientific">Staphylococcus aureus (strain MSSA476)</name>
    <dbReference type="NCBI Taxonomy" id="282459"/>
    <lineage>
        <taxon>Bacteria</taxon>
        <taxon>Bacillati</taxon>
        <taxon>Bacillota</taxon>
        <taxon>Bacilli</taxon>
        <taxon>Bacillales</taxon>
        <taxon>Staphylococcaceae</taxon>
        <taxon>Staphylococcus</taxon>
    </lineage>
</organism>
<accession>Q6GBC5</accession>
<comment type="function">
    <text evidence="1">Member of the two-component regulatory system SaeR/SaeS involved in the regulation of staphylococcal virulence factors in a strain-dependent fashion. Probably functions as a membrane-associated protein kinase that upon sensing the appropriate signal, autophosphorylates and in turn activates the cytosolic response regulator SaeR (By similarity).</text>
</comment>
<comment type="catalytic activity">
    <reaction>
        <text>ATP + protein L-histidine = ADP + protein N-phospho-L-histidine.</text>
        <dbReference type="EC" id="2.7.13.3"/>
    </reaction>
</comment>
<comment type="subcellular location">
    <subcellularLocation>
        <location evidence="1">Cell membrane</location>
        <topology evidence="1">Multi-pass membrane protein</topology>
    </subcellularLocation>
</comment>
<comment type="PTM">
    <text evidence="1">Autophosphorylated.</text>
</comment>